<reference key="1">
    <citation type="journal article" date="2013" name="Plant Physiol.">
        <title>A Nostoc punctiforme Sugar Transporter Necessary to Establish a Cyanobacterium-Plant Symbiosis.</title>
        <authorList>
            <person name="Ekman M."/>
            <person name="Picossi S."/>
            <person name="Campbell E.L."/>
            <person name="Meeks J.C."/>
            <person name="Flores E."/>
        </authorList>
    </citation>
    <scope>NUCLEOTIDE SEQUENCE [LARGE SCALE GENOMIC DNA]</scope>
    <source>
        <strain>ATCC 29133 / PCC 73102</strain>
    </source>
</reference>
<accession>B2J8Q3</accession>
<name>PETM_NOSP7</name>
<proteinExistence type="inferred from homology"/>
<dbReference type="EMBL" id="CP001037">
    <property type="protein sequence ID" value="ACC82541.1"/>
    <property type="molecule type" value="Genomic_DNA"/>
</dbReference>
<dbReference type="RefSeq" id="WP_012410508.1">
    <property type="nucleotide sequence ID" value="NC_010628.1"/>
</dbReference>
<dbReference type="SMR" id="B2J8Q3"/>
<dbReference type="STRING" id="63737.Npun_R4163"/>
<dbReference type="EnsemblBacteria" id="ACC82541">
    <property type="protein sequence ID" value="ACC82541"/>
    <property type="gene ID" value="Npun_R4163"/>
</dbReference>
<dbReference type="KEGG" id="npu:Npun_R4163"/>
<dbReference type="HOGENOM" id="CLU_216743_2_0_3"/>
<dbReference type="OrthoDB" id="468305at2"/>
<dbReference type="PhylomeDB" id="B2J8Q3"/>
<dbReference type="Proteomes" id="UP000001191">
    <property type="component" value="Chromosome"/>
</dbReference>
<dbReference type="GO" id="GO:0009512">
    <property type="term" value="C:cytochrome b6f complex"/>
    <property type="evidence" value="ECO:0007669"/>
    <property type="project" value="InterPro"/>
</dbReference>
<dbReference type="GO" id="GO:0031676">
    <property type="term" value="C:plasma membrane-derived thylakoid membrane"/>
    <property type="evidence" value="ECO:0007669"/>
    <property type="project" value="UniProtKB-SubCell"/>
</dbReference>
<dbReference type="GO" id="GO:0009055">
    <property type="term" value="F:electron transfer activity"/>
    <property type="evidence" value="ECO:0007669"/>
    <property type="project" value="UniProtKB-UniRule"/>
</dbReference>
<dbReference type="GO" id="GO:0015979">
    <property type="term" value="P:photosynthesis"/>
    <property type="evidence" value="ECO:0007669"/>
    <property type="project" value="UniProtKB-KW"/>
</dbReference>
<dbReference type="HAMAP" id="MF_00396">
    <property type="entry name" value="Cytb6_f_PetM"/>
    <property type="match status" value="1"/>
</dbReference>
<dbReference type="InterPro" id="IPR012595">
    <property type="entry name" value="PetM_cyt_b6/f_cplx_su7"/>
</dbReference>
<dbReference type="Pfam" id="PF08041">
    <property type="entry name" value="PetM"/>
    <property type="match status" value="1"/>
</dbReference>
<dbReference type="SUPFAM" id="SSF103441">
    <property type="entry name" value="PetM subunit of the cytochrome b6f complex"/>
    <property type="match status" value="1"/>
</dbReference>
<keyword id="KW-0249">Electron transport</keyword>
<keyword id="KW-0472">Membrane</keyword>
<keyword id="KW-0602">Photosynthesis</keyword>
<keyword id="KW-1185">Reference proteome</keyword>
<keyword id="KW-0793">Thylakoid</keyword>
<keyword id="KW-0812">Transmembrane</keyword>
<keyword id="KW-1133">Transmembrane helix</keyword>
<keyword id="KW-0813">Transport</keyword>
<evidence type="ECO:0000255" key="1">
    <source>
        <dbReference type="HAMAP-Rule" id="MF_00396"/>
    </source>
</evidence>
<sequence>MGGEILNAAILSFGLIFVGWGLGALLLKIQGGEE</sequence>
<organism>
    <name type="scientific">Nostoc punctiforme (strain ATCC 29133 / PCC 73102)</name>
    <dbReference type="NCBI Taxonomy" id="63737"/>
    <lineage>
        <taxon>Bacteria</taxon>
        <taxon>Bacillati</taxon>
        <taxon>Cyanobacteriota</taxon>
        <taxon>Cyanophyceae</taxon>
        <taxon>Nostocales</taxon>
        <taxon>Nostocaceae</taxon>
        <taxon>Nostoc</taxon>
    </lineage>
</organism>
<gene>
    <name evidence="1" type="primary">petM</name>
    <name type="ordered locus">Npun_R4163</name>
</gene>
<protein>
    <recommendedName>
        <fullName evidence="1">Cytochrome b6-f complex subunit 7</fullName>
    </recommendedName>
    <alternativeName>
        <fullName evidence="1">Cytochrome b6-f complex subunit PetM</fullName>
    </alternativeName>
    <alternativeName>
        <fullName evidence="1">Cytochrome b6-f complex subunit VII</fullName>
    </alternativeName>
</protein>
<comment type="function">
    <text evidence="1">Component of the cytochrome b6-f complex, which mediates electron transfer between photosystem II (PSII) and photosystem I (PSI), cyclic electron flow around PSI, and state transitions.</text>
</comment>
<comment type="subunit">
    <text evidence="1">The 4 large subunits of the cytochrome b6-f complex are cytochrome b6, subunit IV (17 kDa polypeptide, PetD), cytochrome f and the Rieske protein, while the 4 small subunits are PetG, PetL, PetM and PetN. The complex functions as a dimer.</text>
</comment>
<comment type="subcellular location">
    <subcellularLocation>
        <location evidence="1">Cellular thylakoid membrane</location>
        <topology evidence="1">Single-pass membrane protein</topology>
    </subcellularLocation>
</comment>
<comment type="similarity">
    <text evidence="1">Belongs to the PetM family.</text>
</comment>
<feature type="chain" id="PRO_1000192351" description="Cytochrome b6-f complex subunit 7">
    <location>
        <begin position="1"/>
        <end position="34"/>
    </location>
</feature>
<feature type="transmembrane region" description="Helical" evidence="1">
    <location>
        <begin position="9"/>
        <end position="27"/>
    </location>
</feature>